<sequence>MEAYEQVQKGPLKLKGVAELGVTKRKKKKKDKDKAKMLEAMGTSKKSEEEKRRCLDKRTPAQAAFEKMQEKRQMERILKKASKTHKQRVEDFNRHLDTLTEHYDIPKVSWTK</sequence>
<accession>Q9CR80</accession>
<accession>Q8K5E4</accession>
<keyword id="KW-0053">Apoptosis</keyword>
<keyword id="KW-0131">Cell cycle</keyword>
<keyword id="KW-0539">Nucleus</keyword>
<keyword id="KW-1185">Reference proteome</keyword>
<reference key="1">
    <citation type="submission" date="2000-04" db="EMBL/GenBank/DDBJ databases">
        <title>Isolation of full-length cDNA clones from mouse brain cDNA library made by oligo-capping method.</title>
        <authorList>
            <person name="Osada N."/>
            <person name="Kusuda J."/>
            <person name="Tanuma R."/>
            <person name="Ito A."/>
            <person name="Hirata M."/>
            <person name="Sugano S."/>
            <person name="Hashimoto K."/>
        </authorList>
    </citation>
    <scope>NUCLEOTIDE SEQUENCE [LARGE SCALE MRNA]</scope>
    <source>
        <strain>C57BL/6J</strain>
        <tissue>Brain</tissue>
    </source>
</reference>
<reference key="2">
    <citation type="journal article" date="2005" name="Science">
        <title>The transcriptional landscape of the mammalian genome.</title>
        <authorList>
            <person name="Carninci P."/>
            <person name="Kasukawa T."/>
            <person name="Katayama S."/>
            <person name="Gough J."/>
            <person name="Frith M.C."/>
            <person name="Maeda N."/>
            <person name="Oyama R."/>
            <person name="Ravasi T."/>
            <person name="Lenhard B."/>
            <person name="Wells C."/>
            <person name="Kodzius R."/>
            <person name="Shimokawa K."/>
            <person name="Bajic V.B."/>
            <person name="Brenner S.E."/>
            <person name="Batalov S."/>
            <person name="Forrest A.R."/>
            <person name="Zavolan M."/>
            <person name="Davis M.J."/>
            <person name="Wilming L.G."/>
            <person name="Aidinis V."/>
            <person name="Allen J.E."/>
            <person name="Ambesi-Impiombato A."/>
            <person name="Apweiler R."/>
            <person name="Aturaliya R.N."/>
            <person name="Bailey T.L."/>
            <person name="Bansal M."/>
            <person name="Baxter L."/>
            <person name="Beisel K.W."/>
            <person name="Bersano T."/>
            <person name="Bono H."/>
            <person name="Chalk A.M."/>
            <person name="Chiu K.P."/>
            <person name="Choudhary V."/>
            <person name="Christoffels A."/>
            <person name="Clutterbuck D.R."/>
            <person name="Crowe M.L."/>
            <person name="Dalla E."/>
            <person name="Dalrymple B.P."/>
            <person name="de Bono B."/>
            <person name="Della Gatta G."/>
            <person name="di Bernardo D."/>
            <person name="Down T."/>
            <person name="Engstrom P."/>
            <person name="Fagiolini M."/>
            <person name="Faulkner G."/>
            <person name="Fletcher C.F."/>
            <person name="Fukushima T."/>
            <person name="Furuno M."/>
            <person name="Futaki S."/>
            <person name="Gariboldi M."/>
            <person name="Georgii-Hemming P."/>
            <person name="Gingeras T.R."/>
            <person name="Gojobori T."/>
            <person name="Green R.E."/>
            <person name="Gustincich S."/>
            <person name="Harbers M."/>
            <person name="Hayashi Y."/>
            <person name="Hensch T.K."/>
            <person name="Hirokawa N."/>
            <person name="Hill D."/>
            <person name="Huminiecki L."/>
            <person name="Iacono M."/>
            <person name="Ikeo K."/>
            <person name="Iwama A."/>
            <person name="Ishikawa T."/>
            <person name="Jakt M."/>
            <person name="Kanapin A."/>
            <person name="Katoh M."/>
            <person name="Kawasawa Y."/>
            <person name="Kelso J."/>
            <person name="Kitamura H."/>
            <person name="Kitano H."/>
            <person name="Kollias G."/>
            <person name="Krishnan S.P."/>
            <person name="Kruger A."/>
            <person name="Kummerfeld S.K."/>
            <person name="Kurochkin I.V."/>
            <person name="Lareau L.F."/>
            <person name="Lazarevic D."/>
            <person name="Lipovich L."/>
            <person name="Liu J."/>
            <person name="Liuni S."/>
            <person name="McWilliam S."/>
            <person name="Madan Babu M."/>
            <person name="Madera M."/>
            <person name="Marchionni L."/>
            <person name="Matsuda H."/>
            <person name="Matsuzawa S."/>
            <person name="Miki H."/>
            <person name="Mignone F."/>
            <person name="Miyake S."/>
            <person name="Morris K."/>
            <person name="Mottagui-Tabar S."/>
            <person name="Mulder N."/>
            <person name="Nakano N."/>
            <person name="Nakauchi H."/>
            <person name="Ng P."/>
            <person name="Nilsson R."/>
            <person name="Nishiguchi S."/>
            <person name="Nishikawa S."/>
            <person name="Nori F."/>
            <person name="Ohara O."/>
            <person name="Okazaki Y."/>
            <person name="Orlando V."/>
            <person name="Pang K.C."/>
            <person name="Pavan W.J."/>
            <person name="Pavesi G."/>
            <person name="Pesole G."/>
            <person name="Petrovsky N."/>
            <person name="Piazza S."/>
            <person name="Reed J."/>
            <person name="Reid J.F."/>
            <person name="Ring B.Z."/>
            <person name="Ringwald M."/>
            <person name="Rost B."/>
            <person name="Ruan Y."/>
            <person name="Salzberg S.L."/>
            <person name="Sandelin A."/>
            <person name="Schneider C."/>
            <person name="Schoenbach C."/>
            <person name="Sekiguchi K."/>
            <person name="Semple C.A."/>
            <person name="Seno S."/>
            <person name="Sessa L."/>
            <person name="Sheng Y."/>
            <person name="Shibata Y."/>
            <person name="Shimada H."/>
            <person name="Shimada K."/>
            <person name="Silva D."/>
            <person name="Sinclair B."/>
            <person name="Sperling S."/>
            <person name="Stupka E."/>
            <person name="Sugiura K."/>
            <person name="Sultana R."/>
            <person name="Takenaka Y."/>
            <person name="Taki K."/>
            <person name="Tammoja K."/>
            <person name="Tan S.L."/>
            <person name="Tang S."/>
            <person name="Taylor M.S."/>
            <person name="Tegner J."/>
            <person name="Teichmann S.A."/>
            <person name="Ueda H.R."/>
            <person name="van Nimwegen E."/>
            <person name="Verardo R."/>
            <person name="Wei C.L."/>
            <person name="Yagi K."/>
            <person name="Yamanishi H."/>
            <person name="Zabarovsky E."/>
            <person name="Zhu S."/>
            <person name="Zimmer A."/>
            <person name="Hide W."/>
            <person name="Bult C."/>
            <person name="Grimmond S.M."/>
            <person name="Teasdale R.D."/>
            <person name="Liu E.T."/>
            <person name="Brusic V."/>
            <person name="Quackenbush J."/>
            <person name="Wahlestedt C."/>
            <person name="Mattick J.S."/>
            <person name="Hume D.A."/>
            <person name="Kai C."/>
            <person name="Sasaki D."/>
            <person name="Tomaru Y."/>
            <person name="Fukuda S."/>
            <person name="Kanamori-Katayama M."/>
            <person name="Suzuki M."/>
            <person name="Aoki J."/>
            <person name="Arakawa T."/>
            <person name="Iida J."/>
            <person name="Imamura K."/>
            <person name="Itoh M."/>
            <person name="Kato T."/>
            <person name="Kawaji H."/>
            <person name="Kawagashira N."/>
            <person name="Kawashima T."/>
            <person name="Kojima M."/>
            <person name="Kondo S."/>
            <person name="Konno H."/>
            <person name="Nakano K."/>
            <person name="Ninomiya N."/>
            <person name="Nishio T."/>
            <person name="Okada M."/>
            <person name="Plessy C."/>
            <person name="Shibata K."/>
            <person name="Shiraki T."/>
            <person name="Suzuki S."/>
            <person name="Tagami M."/>
            <person name="Waki K."/>
            <person name="Watahiki A."/>
            <person name="Okamura-Oho Y."/>
            <person name="Suzuki H."/>
            <person name="Kawai J."/>
            <person name="Hayashizaki Y."/>
        </authorList>
    </citation>
    <scope>NUCLEOTIDE SEQUENCE [LARGE SCALE MRNA]</scope>
    <source>
        <strain>C57BL/6J</strain>
        <tissue>Bone marrow</tissue>
        <tissue>Embryo</tissue>
        <tissue>Liver</tissue>
        <tissue>Small intestine</tissue>
    </source>
</reference>
<reference key="3">
    <citation type="journal article" date="2004" name="Genome Res.">
        <title>The status, quality, and expansion of the NIH full-length cDNA project: the Mammalian Gene Collection (MGC).</title>
        <authorList>
            <consortium name="The MGC Project Team"/>
        </authorList>
    </citation>
    <scope>NUCLEOTIDE SEQUENCE [LARGE SCALE MRNA]</scope>
    <source>
        <strain>Czech II</strain>
        <tissue>Mammary tumor</tissue>
    </source>
</reference>
<reference key="4">
    <citation type="journal article" date="2011" name="Oncogene">
        <title>Anti-proliferative and pro-apoptotic actions of a novel human and mouse ovarian tumor-associated gene OTAG-12: downregulation, alternative splicing and drug sensitization.</title>
        <authorList>
            <person name="Chen X."/>
            <person name="Zhang H."/>
            <person name="Aravindakshan J.P."/>
            <person name="Gotlieb W.H."/>
            <person name="Sairam M.R."/>
        </authorList>
    </citation>
    <scope>FUNCTION</scope>
    <scope>TISSUE SPECIFICITY</scope>
</reference>
<protein>
    <recommendedName>
        <fullName>Protein FAM32A</fullName>
    </recommendedName>
    <alternativeName>
        <fullName>Ovarian tumor associated gene 12</fullName>
        <shortName>OTAG-12</shortName>
    </alternativeName>
</protein>
<name>FA32A_MOUSE</name>
<feature type="chain" id="PRO_0000223251" description="Protein FAM32A">
    <location>
        <begin position="1"/>
        <end position="112"/>
    </location>
</feature>
<feature type="region of interest" description="Disordered" evidence="2">
    <location>
        <begin position="23"/>
        <end position="56"/>
    </location>
</feature>
<feature type="compositionally biased region" description="Basic and acidic residues" evidence="2">
    <location>
        <begin position="45"/>
        <end position="56"/>
    </location>
</feature>
<feature type="sequence conflict" description="In Ref. 1; BAB93548." evidence="4" ref="1">
    <original>L</original>
    <variation>P</variation>
    <location>
        <position position="12"/>
    </location>
</feature>
<feature type="sequence conflict" description="In Ref. 1; BAB93548." evidence="4" ref="1">
    <original>M</original>
    <variation>V</variation>
    <location>
        <position position="37"/>
    </location>
</feature>
<gene>
    <name type="primary">Fam32a</name>
    <name type="synonym">Otag12</name>
    <name type="ORF">MNCb-3154</name>
</gene>
<evidence type="ECO:0000250" key="1"/>
<evidence type="ECO:0000256" key="2">
    <source>
        <dbReference type="SAM" id="MobiDB-lite"/>
    </source>
</evidence>
<evidence type="ECO:0000269" key="3">
    <source>
    </source>
</evidence>
<evidence type="ECO:0000305" key="4"/>
<dbReference type="EMBL" id="AB041658">
    <property type="protein sequence ID" value="BAB93548.1"/>
    <property type="molecule type" value="mRNA"/>
</dbReference>
<dbReference type="EMBL" id="AK008285">
    <property type="protein sequence ID" value="BAB25576.1"/>
    <property type="molecule type" value="mRNA"/>
</dbReference>
<dbReference type="EMBL" id="AK011922">
    <property type="protein sequence ID" value="BAB27918.1"/>
    <property type="molecule type" value="mRNA"/>
</dbReference>
<dbReference type="EMBL" id="AK075976">
    <property type="protein sequence ID" value="BAC36089.1"/>
    <property type="molecule type" value="mRNA"/>
</dbReference>
<dbReference type="EMBL" id="AK082792">
    <property type="protein sequence ID" value="BAC38622.1"/>
    <property type="molecule type" value="mRNA"/>
</dbReference>
<dbReference type="EMBL" id="AK150416">
    <property type="protein sequence ID" value="BAE29540.1"/>
    <property type="molecule type" value="mRNA"/>
</dbReference>
<dbReference type="EMBL" id="BC006058">
    <property type="protein sequence ID" value="AAH06058.1"/>
    <property type="molecule type" value="mRNA"/>
</dbReference>
<dbReference type="CCDS" id="CCDS52595.1"/>
<dbReference type="RefSeq" id="NP_080731.1">
    <property type="nucleotide sequence ID" value="NM_026455.5"/>
</dbReference>
<dbReference type="SMR" id="Q9CR80"/>
<dbReference type="BioGRID" id="212536">
    <property type="interactions" value="1"/>
</dbReference>
<dbReference type="FunCoup" id="Q9CR80">
    <property type="interactions" value="1831"/>
</dbReference>
<dbReference type="IntAct" id="Q9CR80">
    <property type="interactions" value="3"/>
</dbReference>
<dbReference type="MINT" id="Q9CR80"/>
<dbReference type="STRING" id="10090.ENSMUSP00000003123"/>
<dbReference type="iPTMnet" id="Q9CR80"/>
<dbReference type="PhosphoSitePlus" id="Q9CR80"/>
<dbReference type="PaxDb" id="10090-ENSMUSP00000003123"/>
<dbReference type="PeptideAtlas" id="Q9CR80"/>
<dbReference type="ProteomicsDB" id="266821"/>
<dbReference type="Pumba" id="Q9CR80"/>
<dbReference type="Antibodypedia" id="54347">
    <property type="antibodies" value="45 antibodies from 15 providers"/>
</dbReference>
<dbReference type="DNASU" id="67922"/>
<dbReference type="Ensembl" id="ENSMUST00000003123.10">
    <property type="protein sequence ID" value="ENSMUSP00000003123.9"/>
    <property type="gene ID" value="ENSMUSG00000003039.10"/>
</dbReference>
<dbReference type="GeneID" id="67922"/>
<dbReference type="KEGG" id="mmu:67922"/>
<dbReference type="UCSC" id="uc009mfn.1">
    <property type="organism name" value="mouse"/>
</dbReference>
<dbReference type="AGR" id="MGI:1915172"/>
<dbReference type="CTD" id="26017"/>
<dbReference type="MGI" id="MGI:1915172">
    <property type="gene designation" value="Fam32a"/>
</dbReference>
<dbReference type="VEuPathDB" id="HostDB:ENSMUSG00000003039"/>
<dbReference type="eggNOG" id="KOG3410">
    <property type="taxonomic scope" value="Eukaryota"/>
</dbReference>
<dbReference type="GeneTree" id="ENSGT00390000013811"/>
<dbReference type="HOGENOM" id="CLU_098435_3_0_1"/>
<dbReference type="InParanoid" id="Q9CR80"/>
<dbReference type="OMA" id="QLSEHHD"/>
<dbReference type="OrthoDB" id="205403at2759"/>
<dbReference type="PhylomeDB" id="Q9CR80"/>
<dbReference type="TreeFam" id="TF314020"/>
<dbReference type="Reactome" id="R-MMU-72163">
    <property type="pathway name" value="mRNA Splicing - Major Pathway"/>
</dbReference>
<dbReference type="BioGRID-ORCS" id="67922">
    <property type="hits" value="23 hits in 77 CRISPR screens"/>
</dbReference>
<dbReference type="ChiTaRS" id="Fam32a">
    <property type="organism name" value="mouse"/>
</dbReference>
<dbReference type="PRO" id="PR:Q9CR80"/>
<dbReference type="Proteomes" id="UP000000589">
    <property type="component" value="Chromosome 8"/>
</dbReference>
<dbReference type="RNAct" id="Q9CR80">
    <property type="molecule type" value="protein"/>
</dbReference>
<dbReference type="Bgee" id="ENSMUSG00000003039">
    <property type="expression patterns" value="Expressed in indifferent gonad and 263 other cell types or tissues"/>
</dbReference>
<dbReference type="GO" id="GO:0005730">
    <property type="term" value="C:nucleolus"/>
    <property type="evidence" value="ECO:0007669"/>
    <property type="project" value="Ensembl"/>
</dbReference>
<dbReference type="GO" id="GO:0005654">
    <property type="term" value="C:nucleoplasm"/>
    <property type="evidence" value="ECO:0007669"/>
    <property type="project" value="Ensembl"/>
</dbReference>
<dbReference type="GO" id="GO:0006915">
    <property type="term" value="P:apoptotic process"/>
    <property type="evidence" value="ECO:0007669"/>
    <property type="project" value="UniProtKB-KW"/>
</dbReference>
<dbReference type="InterPro" id="IPR013865">
    <property type="entry name" value="FAM32A"/>
</dbReference>
<dbReference type="PANTHER" id="PTHR13282">
    <property type="entry name" value="PROTEIN FAM32A"/>
    <property type="match status" value="1"/>
</dbReference>
<dbReference type="PANTHER" id="PTHR13282:SF6">
    <property type="entry name" value="PROTEIN FAM32A"/>
    <property type="match status" value="1"/>
</dbReference>
<dbReference type="Pfam" id="PF08555">
    <property type="entry name" value="FAM32A"/>
    <property type="match status" value="1"/>
</dbReference>
<proteinExistence type="evidence at transcript level"/>
<comment type="function">
    <text evidence="1 3">May induce G2 arrest and apoptosis (By similarity). May also increase cell sensitivity to apoptotic stimuli (By similarity). In cell lines, may play a role in the inhibition of anchor-independent cell growth.</text>
</comment>
<comment type="subcellular location">
    <subcellularLocation>
        <location evidence="1">Nucleus</location>
    </subcellularLocation>
</comment>
<comment type="tissue specificity">
    <text evidence="3">Widely expressed, with highest level in pancreas and lowest in muscle.</text>
</comment>
<comment type="similarity">
    <text evidence="4">Belongs to the FAM32 family.</text>
</comment>
<organism>
    <name type="scientific">Mus musculus</name>
    <name type="common">Mouse</name>
    <dbReference type="NCBI Taxonomy" id="10090"/>
    <lineage>
        <taxon>Eukaryota</taxon>
        <taxon>Metazoa</taxon>
        <taxon>Chordata</taxon>
        <taxon>Craniata</taxon>
        <taxon>Vertebrata</taxon>
        <taxon>Euteleostomi</taxon>
        <taxon>Mammalia</taxon>
        <taxon>Eutheria</taxon>
        <taxon>Euarchontoglires</taxon>
        <taxon>Glires</taxon>
        <taxon>Rodentia</taxon>
        <taxon>Myomorpha</taxon>
        <taxon>Muroidea</taxon>
        <taxon>Muridae</taxon>
        <taxon>Murinae</taxon>
        <taxon>Mus</taxon>
        <taxon>Mus</taxon>
    </lineage>
</organism>